<feature type="chain" id="PRO_0000159420" description="Cysteine--tRNA ligase">
    <location>
        <begin position="1"/>
        <end position="471"/>
    </location>
</feature>
<feature type="short sequence motif" description="'HIGH' region">
    <location>
        <begin position="32"/>
        <end position="42"/>
    </location>
</feature>
<feature type="short sequence motif" description="'KMSKS' region">
    <location>
        <begin position="270"/>
        <end position="274"/>
    </location>
</feature>
<feature type="binding site" evidence="1">
    <location>
        <position position="30"/>
    </location>
    <ligand>
        <name>Zn(2+)</name>
        <dbReference type="ChEBI" id="CHEBI:29105"/>
    </ligand>
</feature>
<feature type="binding site" evidence="1">
    <location>
        <position position="212"/>
    </location>
    <ligand>
        <name>Zn(2+)</name>
        <dbReference type="ChEBI" id="CHEBI:29105"/>
    </ligand>
</feature>
<feature type="binding site" evidence="1">
    <location>
        <position position="237"/>
    </location>
    <ligand>
        <name>Zn(2+)</name>
        <dbReference type="ChEBI" id="CHEBI:29105"/>
    </ligand>
</feature>
<feature type="binding site" evidence="1">
    <location>
        <position position="241"/>
    </location>
    <ligand>
        <name>Zn(2+)</name>
        <dbReference type="ChEBI" id="CHEBI:29105"/>
    </ligand>
</feature>
<feature type="binding site" evidence="1">
    <location>
        <position position="273"/>
    </location>
    <ligand>
        <name>ATP</name>
        <dbReference type="ChEBI" id="CHEBI:30616"/>
    </ligand>
</feature>
<organism>
    <name type="scientific">Leptospira interrogans serogroup Icterohaemorrhagiae serovar Lai (strain 56601)</name>
    <dbReference type="NCBI Taxonomy" id="189518"/>
    <lineage>
        <taxon>Bacteria</taxon>
        <taxon>Pseudomonadati</taxon>
        <taxon>Spirochaetota</taxon>
        <taxon>Spirochaetia</taxon>
        <taxon>Leptospirales</taxon>
        <taxon>Leptospiraceae</taxon>
        <taxon>Leptospira</taxon>
    </lineage>
</organism>
<accession>Q8F525</accession>
<comment type="catalytic activity">
    <reaction evidence="1">
        <text>tRNA(Cys) + L-cysteine + ATP = L-cysteinyl-tRNA(Cys) + AMP + diphosphate</text>
        <dbReference type="Rhea" id="RHEA:17773"/>
        <dbReference type="Rhea" id="RHEA-COMP:9661"/>
        <dbReference type="Rhea" id="RHEA-COMP:9679"/>
        <dbReference type="ChEBI" id="CHEBI:30616"/>
        <dbReference type="ChEBI" id="CHEBI:33019"/>
        <dbReference type="ChEBI" id="CHEBI:35235"/>
        <dbReference type="ChEBI" id="CHEBI:78442"/>
        <dbReference type="ChEBI" id="CHEBI:78517"/>
        <dbReference type="ChEBI" id="CHEBI:456215"/>
        <dbReference type="EC" id="6.1.1.16"/>
    </reaction>
</comment>
<comment type="cofactor">
    <cofactor evidence="1">
        <name>Zn(2+)</name>
        <dbReference type="ChEBI" id="CHEBI:29105"/>
    </cofactor>
    <text evidence="1">Binds 1 zinc ion per subunit.</text>
</comment>
<comment type="subunit">
    <text evidence="1">Monomer.</text>
</comment>
<comment type="subcellular location">
    <subcellularLocation>
        <location evidence="1">Cytoplasm</location>
    </subcellularLocation>
</comment>
<comment type="similarity">
    <text evidence="1">Belongs to the class-I aminoacyl-tRNA synthetase family.</text>
</comment>
<keyword id="KW-0030">Aminoacyl-tRNA synthetase</keyword>
<keyword id="KW-0067">ATP-binding</keyword>
<keyword id="KW-0963">Cytoplasm</keyword>
<keyword id="KW-0436">Ligase</keyword>
<keyword id="KW-0479">Metal-binding</keyword>
<keyword id="KW-0547">Nucleotide-binding</keyword>
<keyword id="KW-0648">Protein biosynthesis</keyword>
<keyword id="KW-1185">Reference proteome</keyword>
<keyword id="KW-0862">Zinc</keyword>
<gene>
    <name evidence="1" type="primary">cysS</name>
    <name type="ordered locus">LA_1863</name>
</gene>
<sequence>MIEIQFYNSLSGRKEKFSPSDPNRVTVYSCGPTVYNFAHIGNLRAFLFVDVLRRSLKLLGYGVDMTMNITDIDDKIIRDSIASKKSIIEFTAPWTKAFFEDLKTVSAEILEHYPKATDSIPEMVDIIQKLQKKGLVYKKDESLYFSIQKFQNYGKLSKIDTSGMKTGTRYDTDEYEKEDVRDFVLWKSPKLEGETSWDTLVGTGRPGWHLECSAMIRKVYGSGVDIHTGGVDLLFPHHENEIAQSEGAFPEESFVKTWLHSEHLLVDGQKMSKSKGNFYTLRDLIQQGLDPKAIRFLLISTHYRSKLNFSTDRIAEASANIRKIQNCLDRILELEPDIKADFYFLFSIPFVQTWKKEFEESLADDLNISKALAVVFESVKQINSLLDTNQSDSKQRIEYIQILAYFDRILGVLNFESKKDLLDSEIDSLIEERQIARKNKDFARSDAIRDQLLAQGILIEDTKEGIRWRKK</sequence>
<protein>
    <recommendedName>
        <fullName evidence="1">Cysteine--tRNA ligase</fullName>
        <ecNumber evidence="1">6.1.1.16</ecNumber>
    </recommendedName>
    <alternativeName>
        <fullName evidence="1">Cysteinyl-tRNA synthetase</fullName>
        <shortName evidence="1">CysRS</shortName>
    </alternativeName>
</protein>
<proteinExistence type="inferred from homology"/>
<evidence type="ECO:0000255" key="1">
    <source>
        <dbReference type="HAMAP-Rule" id="MF_00041"/>
    </source>
</evidence>
<name>SYC_LEPIN</name>
<dbReference type="EC" id="6.1.1.16" evidence="1"/>
<dbReference type="EMBL" id="AE010300">
    <property type="protein sequence ID" value="AAN49062.1"/>
    <property type="molecule type" value="Genomic_DNA"/>
</dbReference>
<dbReference type="RefSeq" id="NP_712044.1">
    <property type="nucleotide sequence ID" value="NC_004342.2"/>
</dbReference>
<dbReference type="RefSeq" id="WP_000570132.1">
    <property type="nucleotide sequence ID" value="NC_004342.2"/>
</dbReference>
<dbReference type="SMR" id="Q8F525"/>
<dbReference type="FunCoup" id="Q8F525">
    <property type="interactions" value="450"/>
</dbReference>
<dbReference type="STRING" id="189518.LA_1863"/>
<dbReference type="PaxDb" id="189518-LA_1863"/>
<dbReference type="EnsemblBacteria" id="AAN49062">
    <property type="protein sequence ID" value="AAN49062"/>
    <property type="gene ID" value="LA_1863"/>
</dbReference>
<dbReference type="KEGG" id="lil:LA_1863"/>
<dbReference type="PATRIC" id="fig|189518.3.peg.1854"/>
<dbReference type="HOGENOM" id="CLU_013528_0_1_12"/>
<dbReference type="InParanoid" id="Q8F525"/>
<dbReference type="OrthoDB" id="9815130at2"/>
<dbReference type="Proteomes" id="UP000001408">
    <property type="component" value="Chromosome I"/>
</dbReference>
<dbReference type="GO" id="GO:0005737">
    <property type="term" value="C:cytoplasm"/>
    <property type="evidence" value="ECO:0000318"/>
    <property type="project" value="GO_Central"/>
</dbReference>
<dbReference type="GO" id="GO:0005829">
    <property type="term" value="C:cytosol"/>
    <property type="evidence" value="ECO:0000318"/>
    <property type="project" value="GO_Central"/>
</dbReference>
<dbReference type="GO" id="GO:0005524">
    <property type="term" value="F:ATP binding"/>
    <property type="evidence" value="ECO:0000318"/>
    <property type="project" value="GO_Central"/>
</dbReference>
<dbReference type="GO" id="GO:0004817">
    <property type="term" value="F:cysteine-tRNA ligase activity"/>
    <property type="evidence" value="ECO:0000318"/>
    <property type="project" value="GO_Central"/>
</dbReference>
<dbReference type="GO" id="GO:0008270">
    <property type="term" value="F:zinc ion binding"/>
    <property type="evidence" value="ECO:0007669"/>
    <property type="project" value="UniProtKB-UniRule"/>
</dbReference>
<dbReference type="GO" id="GO:0006423">
    <property type="term" value="P:cysteinyl-tRNA aminoacylation"/>
    <property type="evidence" value="ECO:0000318"/>
    <property type="project" value="GO_Central"/>
</dbReference>
<dbReference type="CDD" id="cd00672">
    <property type="entry name" value="CysRS_core"/>
    <property type="match status" value="1"/>
</dbReference>
<dbReference type="FunFam" id="3.40.50.620:FF:000130">
    <property type="entry name" value="Cysteine--tRNA ligase"/>
    <property type="match status" value="1"/>
</dbReference>
<dbReference type="Gene3D" id="1.20.120.1910">
    <property type="entry name" value="Cysteine-tRNA ligase, C-terminal anti-codon recognition domain"/>
    <property type="match status" value="1"/>
</dbReference>
<dbReference type="Gene3D" id="3.40.50.620">
    <property type="entry name" value="HUPs"/>
    <property type="match status" value="1"/>
</dbReference>
<dbReference type="HAMAP" id="MF_00041">
    <property type="entry name" value="Cys_tRNA_synth"/>
    <property type="match status" value="1"/>
</dbReference>
<dbReference type="InterPro" id="IPR015803">
    <property type="entry name" value="Cys-tRNA-ligase"/>
</dbReference>
<dbReference type="InterPro" id="IPR015273">
    <property type="entry name" value="Cys-tRNA-synt_Ia_DALR"/>
</dbReference>
<dbReference type="InterPro" id="IPR024909">
    <property type="entry name" value="Cys-tRNA/MSH_ligase"/>
</dbReference>
<dbReference type="InterPro" id="IPR056411">
    <property type="entry name" value="CysS_C"/>
</dbReference>
<dbReference type="InterPro" id="IPR014729">
    <property type="entry name" value="Rossmann-like_a/b/a_fold"/>
</dbReference>
<dbReference type="InterPro" id="IPR032678">
    <property type="entry name" value="tRNA-synt_1_cat_dom"/>
</dbReference>
<dbReference type="InterPro" id="IPR009080">
    <property type="entry name" value="tRNAsynth_Ia_anticodon-bd"/>
</dbReference>
<dbReference type="NCBIfam" id="TIGR00435">
    <property type="entry name" value="cysS"/>
    <property type="match status" value="1"/>
</dbReference>
<dbReference type="PANTHER" id="PTHR10890:SF3">
    <property type="entry name" value="CYSTEINE--TRNA LIGASE, CYTOPLASMIC"/>
    <property type="match status" value="1"/>
</dbReference>
<dbReference type="PANTHER" id="PTHR10890">
    <property type="entry name" value="CYSTEINYL-TRNA SYNTHETASE"/>
    <property type="match status" value="1"/>
</dbReference>
<dbReference type="Pfam" id="PF23493">
    <property type="entry name" value="CysS_C"/>
    <property type="match status" value="1"/>
</dbReference>
<dbReference type="Pfam" id="PF09190">
    <property type="entry name" value="DALR_2"/>
    <property type="match status" value="1"/>
</dbReference>
<dbReference type="Pfam" id="PF01406">
    <property type="entry name" value="tRNA-synt_1e"/>
    <property type="match status" value="1"/>
</dbReference>
<dbReference type="PRINTS" id="PR00983">
    <property type="entry name" value="TRNASYNTHCYS"/>
</dbReference>
<dbReference type="SMART" id="SM00840">
    <property type="entry name" value="DALR_2"/>
    <property type="match status" value="1"/>
</dbReference>
<dbReference type="SUPFAM" id="SSF47323">
    <property type="entry name" value="Anticodon-binding domain of a subclass of class I aminoacyl-tRNA synthetases"/>
    <property type="match status" value="1"/>
</dbReference>
<dbReference type="SUPFAM" id="SSF52374">
    <property type="entry name" value="Nucleotidylyl transferase"/>
    <property type="match status" value="1"/>
</dbReference>
<reference key="1">
    <citation type="journal article" date="2003" name="Nature">
        <title>Unique physiological and pathogenic features of Leptospira interrogans revealed by whole-genome sequencing.</title>
        <authorList>
            <person name="Ren S.-X."/>
            <person name="Fu G."/>
            <person name="Jiang X.-G."/>
            <person name="Zeng R."/>
            <person name="Miao Y.-G."/>
            <person name="Xu H."/>
            <person name="Zhang Y.-X."/>
            <person name="Xiong H."/>
            <person name="Lu G."/>
            <person name="Lu L.-F."/>
            <person name="Jiang H.-Q."/>
            <person name="Jia J."/>
            <person name="Tu Y.-F."/>
            <person name="Jiang J.-X."/>
            <person name="Gu W.-Y."/>
            <person name="Zhang Y.-Q."/>
            <person name="Cai Z."/>
            <person name="Sheng H.-H."/>
            <person name="Yin H.-F."/>
            <person name="Zhang Y."/>
            <person name="Zhu G.-F."/>
            <person name="Wan M."/>
            <person name="Huang H.-L."/>
            <person name="Qian Z."/>
            <person name="Wang S.-Y."/>
            <person name="Ma W."/>
            <person name="Yao Z.-J."/>
            <person name="Shen Y."/>
            <person name="Qiang B.-Q."/>
            <person name="Xia Q.-C."/>
            <person name="Guo X.-K."/>
            <person name="Danchin A."/>
            <person name="Saint Girons I."/>
            <person name="Somerville R.L."/>
            <person name="Wen Y.-M."/>
            <person name="Shi M.-H."/>
            <person name="Chen Z."/>
            <person name="Xu J.-G."/>
            <person name="Zhao G.-P."/>
        </authorList>
    </citation>
    <scope>NUCLEOTIDE SEQUENCE [LARGE SCALE GENOMIC DNA]</scope>
    <source>
        <strain>56601</strain>
    </source>
</reference>